<organism>
    <name type="scientific">Caulobacter vibrioides (strain NA1000 / CB15N)</name>
    <name type="common">Caulobacter crescentus</name>
    <dbReference type="NCBI Taxonomy" id="565050"/>
    <lineage>
        <taxon>Bacteria</taxon>
        <taxon>Pseudomonadati</taxon>
        <taxon>Pseudomonadota</taxon>
        <taxon>Alphaproteobacteria</taxon>
        <taxon>Caulobacterales</taxon>
        <taxon>Caulobacteraceae</taxon>
        <taxon>Caulobacter</taxon>
    </lineage>
</organism>
<keyword id="KW-0963">Cytoplasm</keyword>
<keyword id="KW-0460">Magnesium</keyword>
<keyword id="KW-0479">Metal-binding</keyword>
<keyword id="KW-0566">Pantothenate biosynthesis</keyword>
<keyword id="KW-1185">Reference proteome</keyword>
<keyword id="KW-0808">Transferase</keyword>
<dbReference type="EC" id="2.1.2.11" evidence="1"/>
<dbReference type="EMBL" id="CP001340">
    <property type="protein sequence ID" value="ACL95188.1"/>
    <property type="molecule type" value="Genomic_DNA"/>
</dbReference>
<dbReference type="RefSeq" id="WP_012640297.1">
    <property type="nucleotide sequence ID" value="NC_011916.1"/>
</dbReference>
<dbReference type="RefSeq" id="YP_002517096.1">
    <property type="nucleotide sequence ID" value="NC_011916.1"/>
</dbReference>
<dbReference type="SMR" id="B8GVL8"/>
<dbReference type="GeneID" id="7331860"/>
<dbReference type="KEGG" id="ccs:CCNA_01723"/>
<dbReference type="PATRIC" id="fig|565050.3.peg.1699"/>
<dbReference type="HOGENOM" id="CLU_036645_1_0_5"/>
<dbReference type="OrthoDB" id="9781789at2"/>
<dbReference type="PhylomeDB" id="B8GVL8"/>
<dbReference type="UniPathway" id="UPA00028">
    <property type="reaction ID" value="UER00003"/>
</dbReference>
<dbReference type="Proteomes" id="UP000001364">
    <property type="component" value="Chromosome"/>
</dbReference>
<dbReference type="GO" id="GO:0005737">
    <property type="term" value="C:cytoplasm"/>
    <property type="evidence" value="ECO:0007669"/>
    <property type="project" value="UniProtKB-SubCell"/>
</dbReference>
<dbReference type="GO" id="GO:0003864">
    <property type="term" value="F:3-methyl-2-oxobutanoate hydroxymethyltransferase activity"/>
    <property type="evidence" value="ECO:0007669"/>
    <property type="project" value="UniProtKB-UniRule"/>
</dbReference>
<dbReference type="GO" id="GO:0000287">
    <property type="term" value="F:magnesium ion binding"/>
    <property type="evidence" value="ECO:0007669"/>
    <property type="project" value="TreeGrafter"/>
</dbReference>
<dbReference type="GO" id="GO:0015940">
    <property type="term" value="P:pantothenate biosynthetic process"/>
    <property type="evidence" value="ECO:0007669"/>
    <property type="project" value="UniProtKB-UniRule"/>
</dbReference>
<dbReference type="CDD" id="cd06557">
    <property type="entry name" value="KPHMT-like"/>
    <property type="match status" value="1"/>
</dbReference>
<dbReference type="FunFam" id="3.20.20.60:FF:000003">
    <property type="entry name" value="3-methyl-2-oxobutanoate hydroxymethyltransferase"/>
    <property type="match status" value="1"/>
</dbReference>
<dbReference type="Gene3D" id="3.20.20.60">
    <property type="entry name" value="Phosphoenolpyruvate-binding domains"/>
    <property type="match status" value="1"/>
</dbReference>
<dbReference type="HAMAP" id="MF_00156">
    <property type="entry name" value="PanB"/>
    <property type="match status" value="1"/>
</dbReference>
<dbReference type="InterPro" id="IPR003700">
    <property type="entry name" value="Pantoate_hydroxy_MeTrfase"/>
</dbReference>
<dbReference type="InterPro" id="IPR015813">
    <property type="entry name" value="Pyrv/PenolPyrv_kinase-like_dom"/>
</dbReference>
<dbReference type="InterPro" id="IPR040442">
    <property type="entry name" value="Pyrv_kinase-like_dom_sf"/>
</dbReference>
<dbReference type="NCBIfam" id="TIGR00222">
    <property type="entry name" value="panB"/>
    <property type="match status" value="1"/>
</dbReference>
<dbReference type="NCBIfam" id="NF001452">
    <property type="entry name" value="PRK00311.1"/>
    <property type="match status" value="1"/>
</dbReference>
<dbReference type="PANTHER" id="PTHR20881">
    <property type="entry name" value="3-METHYL-2-OXOBUTANOATE HYDROXYMETHYLTRANSFERASE"/>
    <property type="match status" value="1"/>
</dbReference>
<dbReference type="PANTHER" id="PTHR20881:SF0">
    <property type="entry name" value="3-METHYL-2-OXOBUTANOATE HYDROXYMETHYLTRANSFERASE"/>
    <property type="match status" value="1"/>
</dbReference>
<dbReference type="Pfam" id="PF02548">
    <property type="entry name" value="Pantoate_transf"/>
    <property type="match status" value="1"/>
</dbReference>
<dbReference type="PIRSF" id="PIRSF000388">
    <property type="entry name" value="Pantoate_hydroxy_MeTrfase"/>
    <property type="match status" value="1"/>
</dbReference>
<dbReference type="SUPFAM" id="SSF51621">
    <property type="entry name" value="Phosphoenolpyruvate/pyruvate domain"/>
    <property type="match status" value="1"/>
</dbReference>
<feature type="chain" id="PRO_1000123374" description="3-methyl-2-oxobutanoate hydroxymethyltransferase">
    <location>
        <begin position="1"/>
        <end position="275"/>
    </location>
</feature>
<feature type="active site" description="Proton acceptor" evidence="1">
    <location>
        <position position="189"/>
    </location>
</feature>
<feature type="binding site" evidence="1">
    <location>
        <begin position="51"/>
        <end position="52"/>
    </location>
    <ligand>
        <name>3-methyl-2-oxobutanoate</name>
        <dbReference type="ChEBI" id="CHEBI:11851"/>
    </ligand>
</feature>
<feature type="binding site" evidence="1">
    <location>
        <position position="51"/>
    </location>
    <ligand>
        <name>Mg(2+)</name>
        <dbReference type="ChEBI" id="CHEBI:18420"/>
    </ligand>
</feature>
<feature type="binding site" evidence="1">
    <location>
        <position position="90"/>
    </location>
    <ligand>
        <name>3-methyl-2-oxobutanoate</name>
        <dbReference type="ChEBI" id="CHEBI:11851"/>
    </ligand>
</feature>
<feature type="binding site" evidence="1">
    <location>
        <position position="90"/>
    </location>
    <ligand>
        <name>Mg(2+)</name>
        <dbReference type="ChEBI" id="CHEBI:18420"/>
    </ligand>
</feature>
<feature type="binding site" evidence="1">
    <location>
        <position position="120"/>
    </location>
    <ligand>
        <name>3-methyl-2-oxobutanoate</name>
        <dbReference type="ChEBI" id="CHEBI:11851"/>
    </ligand>
</feature>
<feature type="binding site" evidence="1">
    <location>
        <position position="122"/>
    </location>
    <ligand>
        <name>Mg(2+)</name>
        <dbReference type="ChEBI" id="CHEBI:18420"/>
    </ligand>
</feature>
<reference key="1">
    <citation type="journal article" date="2010" name="J. Bacteriol.">
        <title>The genetic basis of laboratory adaptation in Caulobacter crescentus.</title>
        <authorList>
            <person name="Marks M.E."/>
            <person name="Castro-Rojas C.M."/>
            <person name="Teiling C."/>
            <person name="Du L."/>
            <person name="Kapatral V."/>
            <person name="Walunas T.L."/>
            <person name="Crosson S."/>
        </authorList>
    </citation>
    <scope>NUCLEOTIDE SEQUENCE [LARGE SCALE GENOMIC DNA]</scope>
    <source>
        <strain>NA1000 / CB15N</strain>
    </source>
</reference>
<name>PANB_CAUVN</name>
<comment type="function">
    <text evidence="1">Catalyzes the reversible reaction in which hydroxymethyl group from 5,10-methylenetetrahydrofolate is transferred onto alpha-ketoisovalerate to form ketopantoate.</text>
</comment>
<comment type="catalytic activity">
    <reaction evidence="1">
        <text>3-methyl-2-oxobutanoate + (6R)-5,10-methylene-5,6,7,8-tetrahydrofolate + H2O = 2-dehydropantoate + (6S)-5,6,7,8-tetrahydrofolate</text>
        <dbReference type="Rhea" id="RHEA:11824"/>
        <dbReference type="ChEBI" id="CHEBI:11561"/>
        <dbReference type="ChEBI" id="CHEBI:11851"/>
        <dbReference type="ChEBI" id="CHEBI:15377"/>
        <dbReference type="ChEBI" id="CHEBI:15636"/>
        <dbReference type="ChEBI" id="CHEBI:57453"/>
        <dbReference type="EC" id="2.1.2.11"/>
    </reaction>
</comment>
<comment type="cofactor">
    <cofactor evidence="1">
        <name>Mg(2+)</name>
        <dbReference type="ChEBI" id="CHEBI:18420"/>
    </cofactor>
    <text evidence="1">Binds 1 Mg(2+) ion per subunit.</text>
</comment>
<comment type="pathway">
    <text evidence="1">Cofactor biosynthesis; (R)-pantothenate biosynthesis; (R)-pantoate from 3-methyl-2-oxobutanoate: step 1/2.</text>
</comment>
<comment type="subunit">
    <text evidence="1">Homodecamer; pentamer of dimers.</text>
</comment>
<comment type="subcellular location">
    <subcellularLocation>
        <location evidence="1">Cytoplasm</location>
    </subcellularLocation>
</comment>
<comment type="similarity">
    <text evidence="1">Belongs to the PanB family.</text>
</comment>
<proteinExistence type="inferred from homology"/>
<gene>
    <name evidence="1" type="primary">panB</name>
    <name type="ordered locus">CCNA_01723</name>
</gene>
<evidence type="ECO:0000255" key="1">
    <source>
        <dbReference type="HAMAP-Rule" id="MF_00156"/>
    </source>
</evidence>
<protein>
    <recommendedName>
        <fullName evidence="1">3-methyl-2-oxobutanoate hydroxymethyltransferase</fullName>
        <ecNumber evidence="1">2.1.2.11</ecNumber>
    </recommendedName>
    <alternativeName>
        <fullName evidence="1">Ketopantoate hydroxymethyltransferase</fullName>
        <shortName evidence="1">KPHMT</shortName>
    </alternativeName>
</protein>
<sequence length="275" mass="29058">MSAHREETVRRLAAPDIAARKGGVPIVCLTAYTAPVAAALDDACDVLLVGDSVGMVVHGLPNTVGVTMEMMILHGQAVMRGSKKAMVVVDMPFGSYEASHEEAYANAVRIMKETGAQAVKVESGPTVPETIAYLTRRGVPVMGHVGLRPQAVLLEGGFKAKGKDDAGRAKVLEEARLTAEAGAFAIVVEGVAESLAREVTESVSVPTIGIGASAGCDGQVLVVDDMLGLFDWTPKFVRRYADLKGEIERAAAQYASDVRDRSFPGPAETYYAKKP</sequence>
<accession>B8GVL8</accession>